<sequence>MACRYPFSPAKVAITRFFYPSPLSRSTTPLFCPPSCRIRVGNTSRMLTSSSSVASENPKSEMAKFLASPNPKSSASEPGPSPHDVLSAPTSAGHISEAEETLSDQLRNPGSSSSSSPSQSSTNNLSSKNAPFKLSSTYSLPSNISVPPEVREHLIEWSKNVLEHSRYVIQEAQKKFVGLGLKVNEMTGYQEVERLKYMVFEKEDELQRLREHARTAKAAYDEAVAARSEAQRETNILLERKHSWTDADVSKFTSLVRSDHTSSHAVASTSIALKDAEIAVDKSFSQLMQVILQRYHEEQVWSDKIRSVSTWANVAGLAINFIIFVGAVLLVEPWKRKRLVEKLEERVASMMERVDHRLEGVEGHLERVAAGSASASAIKEQHSDAAIQGVEDMPSNSTANPLEFVSPQTIPLMAAVDPTINGSESQSDPFFTQTIRGFPNYLDPLVKPSQKRDLAVAGMAGAVAAWILIGAVRLVRA</sequence>
<reference key="1">
    <citation type="journal article" date="2005" name="Science">
        <title>The genome of the basidiomycetous yeast and human pathogen Cryptococcus neoformans.</title>
        <authorList>
            <person name="Loftus B.J."/>
            <person name="Fung E."/>
            <person name="Roncaglia P."/>
            <person name="Rowley D."/>
            <person name="Amedeo P."/>
            <person name="Bruno D."/>
            <person name="Vamathevan J."/>
            <person name="Miranda M."/>
            <person name="Anderson I.J."/>
            <person name="Fraser J.A."/>
            <person name="Allen J.E."/>
            <person name="Bosdet I.E."/>
            <person name="Brent M.R."/>
            <person name="Chiu R."/>
            <person name="Doering T.L."/>
            <person name="Donlin M.J."/>
            <person name="D'Souza C.A."/>
            <person name="Fox D.S."/>
            <person name="Grinberg V."/>
            <person name="Fu J."/>
            <person name="Fukushima M."/>
            <person name="Haas B.J."/>
            <person name="Huang J.C."/>
            <person name="Janbon G."/>
            <person name="Jones S.J.M."/>
            <person name="Koo H.L."/>
            <person name="Krzywinski M.I."/>
            <person name="Kwon-Chung K.J."/>
            <person name="Lengeler K.B."/>
            <person name="Maiti R."/>
            <person name="Marra M.A."/>
            <person name="Marra R.E."/>
            <person name="Mathewson C.A."/>
            <person name="Mitchell T.G."/>
            <person name="Pertea M."/>
            <person name="Riggs F.R."/>
            <person name="Salzberg S.L."/>
            <person name="Schein J.E."/>
            <person name="Shvartsbeyn A."/>
            <person name="Shin H."/>
            <person name="Shumway M."/>
            <person name="Specht C.A."/>
            <person name="Suh B.B."/>
            <person name="Tenney A."/>
            <person name="Utterback T.R."/>
            <person name="Wickes B.L."/>
            <person name="Wortman J.R."/>
            <person name="Wye N.H."/>
            <person name="Kronstad J.W."/>
            <person name="Lodge J.K."/>
            <person name="Heitman J."/>
            <person name="Davis R.W."/>
            <person name="Fraser C.M."/>
            <person name="Hyman R.W."/>
        </authorList>
    </citation>
    <scope>NUCLEOTIDE SEQUENCE [LARGE SCALE GENOMIC DNA]</scope>
    <source>
        <strain>B-3501A</strain>
    </source>
</reference>
<dbReference type="EMBL" id="AAEY01000038">
    <property type="protein sequence ID" value="EAL19657.1"/>
    <property type="molecule type" value="Genomic_DNA"/>
</dbReference>
<dbReference type="RefSeq" id="XP_774304.1">
    <property type="nucleotide sequence ID" value="XM_769211.1"/>
</dbReference>
<dbReference type="SMR" id="P0CR47"/>
<dbReference type="GeneID" id="4937320"/>
<dbReference type="KEGG" id="cnb:CNBG2850"/>
<dbReference type="VEuPathDB" id="FungiDB:CNBG2850"/>
<dbReference type="HOGENOM" id="CLU_580048_0_0_1"/>
<dbReference type="OrthoDB" id="7391at5206"/>
<dbReference type="GO" id="GO:0005743">
    <property type="term" value="C:mitochondrial inner membrane"/>
    <property type="evidence" value="ECO:0007669"/>
    <property type="project" value="UniProtKB-SubCell"/>
</dbReference>
<dbReference type="GO" id="GO:0007007">
    <property type="term" value="P:inner mitochondrial membrane organization"/>
    <property type="evidence" value="ECO:0007669"/>
    <property type="project" value="TreeGrafter"/>
</dbReference>
<dbReference type="InterPro" id="IPR008839">
    <property type="entry name" value="MDM33_fungi"/>
</dbReference>
<dbReference type="PANTHER" id="PTHR31961">
    <property type="entry name" value="SENSITIVE TO HIGH EXPRESSION PROTEIN 9, MITOCHONDRIAL"/>
    <property type="match status" value="1"/>
</dbReference>
<dbReference type="PANTHER" id="PTHR31961:SF3">
    <property type="entry name" value="SENSITIVE TO HIGH EXPRESSION PROTEIN 9, MITOCHONDRIAL"/>
    <property type="match status" value="1"/>
</dbReference>
<dbReference type="Pfam" id="PF05546">
    <property type="entry name" value="She9_MDM33"/>
    <property type="match status" value="1"/>
</dbReference>
<feature type="transit peptide" description="Mitochondrion" evidence="2">
    <location>
        <begin position="1"/>
        <end status="unknown"/>
    </location>
</feature>
<feature type="chain" id="PRO_0000410285" description="Sensitive to high expression protein 9 homolog, mitochondrial">
    <location>
        <begin status="unknown"/>
        <end position="477"/>
    </location>
</feature>
<feature type="topological domain" description="Mitochondrial matrix" evidence="2">
    <location>
        <begin status="unknown"/>
        <end position="310"/>
    </location>
</feature>
<feature type="transmembrane region" description="Helical" evidence="2">
    <location>
        <begin position="311"/>
        <end position="331"/>
    </location>
</feature>
<feature type="topological domain" description="Mitochondrial intermembrane" evidence="2">
    <location>
        <begin position="332"/>
        <end position="454"/>
    </location>
</feature>
<feature type="transmembrane region" description="Helical" evidence="2">
    <location>
        <begin position="455"/>
        <end position="475"/>
    </location>
</feature>
<feature type="topological domain" description="Mitochondrial matrix" evidence="2">
    <location>
        <begin position="476"/>
        <end position="477"/>
    </location>
</feature>
<feature type="region of interest" description="Disordered" evidence="3">
    <location>
        <begin position="49"/>
        <end position="128"/>
    </location>
</feature>
<feature type="coiled-coil region" evidence="2">
    <location>
        <begin position="190"/>
        <end position="233"/>
    </location>
</feature>
<feature type="compositionally biased region" description="Low complexity" evidence="3">
    <location>
        <begin position="111"/>
        <end position="128"/>
    </location>
</feature>
<organism>
    <name type="scientific">Cryptococcus neoformans var. neoformans serotype D (strain B-3501A)</name>
    <name type="common">Filobasidiella neoformans</name>
    <dbReference type="NCBI Taxonomy" id="283643"/>
    <lineage>
        <taxon>Eukaryota</taxon>
        <taxon>Fungi</taxon>
        <taxon>Dikarya</taxon>
        <taxon>Basidiomycota</taxon>
        <taxon>Agaricomycotina</taxon>
        <taxon>Tremellomycetes</taxon>
        <taxon>Tremellales</taxon>
        <taxon>Cryptococcaceae</taxon>
        <taxon>Cryptococcus</taxon>
        <taxon>Cryptococcus neoformans species complex</taxon>
    </lineage>
</organism>
<proteinExistence type="inferred from homology"/>
<gene>
    <name type="primary">SHE9</name>
    <name type="ordered locus">CNBG2850</name>
</gene>
<keyword id="KW-0175">Coiled coil</keyword>
<keyword id="KW-0472">Membrane</keyword>
<keyword id="KW-0496">Mitochondrion</keyword>
<keyword id="KW-0999">Mitochondrion inner membrane</keyword>
<keyword id="KW-0809">Transit peptide</keyword>
<keyword id="KW-0812">Transmembrane</keyword>
<keyword id="KW-1133">Transmembrane helix</keyword>
<evidence type="ECO:0000250" key="1"/>
<evidence type="ECO:0000255" key="2"/>
<evidence type="ECO:0000256" key="3">
    <source>
        <dbReference type="SAM" id="MobiDB-lite"/>
    </source>
</evidence>
<evidence type="ECO:0000305" key="4"/>
<accession>P0CR47</accession>
<accession>Q55PC7</accession>
<accession>Q5KE29</accession>
<protein>
    <recommendedName>
        <fullName>Sensitive to high expression protein 9 homolog, mitochondrial</fullName>
    </recommendedName>
</protein>
<comment type="function">
    <text evidence="1">Required for the maintenance of the structure of the mitochondrial inner membrane. Involved in mitochondrial morphology. Causes growth arrest when highly overexpressed (By similarity).</text>
</comment>
<comment type="subunit">
    <text evidence="1">Homooligomer.</text>
</comment>
<comment type="subcellular location">
    <subcellularLocation>
        <location evidence="1">Mitochondrion inner membrane</location>
        <topology evidence="1">Multi-pass membrane protein</topology>
    </subcellularLocation>
</comment>
<comment type="similarity">
    <text evidence="4">Belongs to the SHE9 family.</text>
</comment>
<name>SHE9_CRYNB</name>